<keyword id="KW-0963">Cytoplasm</keyword>
<keyword id="KW-0251">Elongation factor</keyword>
<keyword id="KW-0342">GTP-binding</keyword>
<keyword id="KW-0547">Nucleotide-binding</keyword>
<keyword id="KW-0648">Protein biosynthesis</keyword>
<sequence>MAREFSLENTRNIGIMAHIDAGKTTTTERILFYTGRIHKIGETHEGASQMDWMEQEQERGITITSAATTAQWKGHRINIIDTPGHVDFTVEVERSLRVLDGAITVLDAQSGVEPQTETVWRQATTYGVPRIVFVNKMDKIGADFLYSVKTLHDRLHANAHPVQLPIGAEDQFSGIIDLVEMCAYHYHDELGKNIERIEIPEDYRDMAEEYRNKLIEAVAELDEELMMKYLEGEEITKEELKAAIRKATISVEFFPVFCGSAFKNKGVQLLLDGVVDYLPSPVDIPPIKGIVPDTEEEVVREADDDAPFAALAFKVMTDPYVGKLTFFRVYSGTLDSGSYVMNSTKRKRERIGRILQMHANHRQEISKVYAGDIAAAVGLKDTTTGDTLCDEKNLVILESMQFPEPVISVAIEPKSKADQDKMGQALQKLQEEDPTFRAHTDPETGQTIISGMGELHLDIIVDRMRREFKVEANVGAPQVAYRETFRKSAQVEGKFIRQSGGRGQYGHVWIEFSPNERGKGFEFENAIVGGVVPKEYVPAVQAGLEEAMQNGVLAGYPVVDIKAKLFDGSYHDVDSSEMAFKIAASLALKNAATKCDPVLLEPIMKVEVVIPEEYLGDIMGDITSRRGRVEGMEARGNAQVVRAMVPLAEMFGYATSLRSNTQGRGTFTMVFDHYEEVPKNIADEIIKKNKGE</sequence>
<dbReference type="EMBL" id="CP001638">
    <property type="protein sequence ID" value="ACS23048.1"/>
    <property type="molecule type" value="Genomic_DNA"/>
</dbReference>
<dbReference type="SMR" id="C5D3R4"/>
<dbReference type="STRING" id="471223.GWCH70_0108"/>
<dbReference type="KEGG" id="gwc:GWCH70_0108"/>
<dbReference type="eggNOG" id="COG0480">
    <property type="taxonomic scope" value="Bacteria"/>
</dbReference>
<dbReference type="HOGENOM" id="CLU_002794_4_1_9"/>
<dbReference type="OrthoDB" id="9804431at2"/>
<dbReference type="GO" id="GO:0005737">
    <property type="term" value="C:cytoplasm"/>
    <property type="evidence" value="ECO:0007669"/>
    <property type="project" value="UniProtKB-SubCell"/>
</dbReference>
<dbReference type="GO" id="GO:0005525">
    <property type="term" value="F:GTP binding"/>
    <property type="evidence" value="ECO:0007669"/>
    <property type="project" value="UniProtKB-UniRule"/>
</dbReference>
<dbReference type="GO" id="GO:0003924">
    <property type="term" value="F:GTPase activity"/>
    <property type="evidence" value="ECO:0007669"/>
    <property type="project" value="InterPro"/>
</dbReference>
<dbReference type="GO" id="GO:0003746">
    <property type="term" value="F:translation elongation factor activity"/>
    <property type="evidence" value="ECO:0007669"/>
    <property type="project" value="UniProtKB-UniRule"/>
</dbReference>
<dbReference type="GO" id="GO:0032790">
    <property type="term" value="P:ribosome disassembly"/>
    <property type="evidence" value="ECO:0007669"/>
    <property type="project" value="TreeGrafter"/>
</dbReference>
<dbReference type="CDD" id="cd01886">
    <property type="entry name" value="EF-G"/>
    <property type="match status" value="1"/>
</dbReference>
<dbReference type="CDD" id="cd16262">
    <property type="entry name" value="EFG_III"/>
    <property type="match status" value="1"/>
</dbReference>
<dbReference type="CDD" id="cd01434">
    <property type="entry name" value="EFG_mtEFG1_IV"/>
    <property type="match status" value="1"/>
</dbReference>
<dbReference type="CDD" id="cd03713">
    <property type="entry name" value="EFG_mtEFG_C"/>
    <property type="match status" value="1"/>
</dbReference>
<dbReference type="CDD" id="cd04088">
    <property type="entry name" value="EFG_mtEFG_II"/>
    <property type="match status" value="1"/>
</dbReference>
<dbReference type="FunFam" id="2.40.30.10:FF:000006">
    <property type="entry name" value="Elongation factor G"/>
    <property type="match status" value="1"/>
</dbReference>
<dbReference type="FunFam" id="3.30.230.10:FF:000003">
    <property type="entry name" value="Elongation factor G"/>
    <property type="match status" value="1"/>
</dbReference>
<dbReference type="FunFam" id="3.30.70.240:FF:000001">
    <property type="entry name" value="Elongation factor G"/>
    <property type="match status" value="1"/>
</dbReference>
<dbReference type="FunFam" id="3.30.70.870:FF:000001">
    <property type="entry name" value="Elongation factor G"/>
    <property type="match status" value="1"/>
</dbReference>
<dbReference type="FunFam" id="3.40.50.300:FF:000029">
    <property type="entry name" value="Elongation factor G"/>
    <property type="match status" value="1"/>
</dbReference>
<dbReference type="Gene3D" id="3.30.230.10">
    <property type="match status" value="1"/>
</dbReference>
<dbReference type="Gene3D" id="3.30.70.240">
    <property type="match status" value="1"/>
</dbReference>
<dbReference type="Gene3D" id="3.30.70.870">
    <property type="entry name" value="Elongation Factor G (Translational Gtpase), domain 3"/>
    <property type="match status" value="1"/>
</dbReference>
<dbReference type="Gene3D" id="3.40.50.300">
    <property type="entry name" value="P-loop containing nucleotide triphosphate hydrolases"/>
    <property type="match status" value="1"/>
</dbReference>
<dbReference type="Gene3D" id="2.40.30.10">
    <property type="entry name" value="Translation factors"/>
    <property type="match status" value="1"/>
</dbReference>
<dbReference type="HAMAP" id="MF_00054_B">
    <property type="entry name" value="EF_G_EF_2_B"/>
    <property type="match status" value="1"/>
</dbReference>
<dbReference type="InterPro" id="IPR041095">
    <property type="entry name" value="EFG_II"/>
</dbReference>
<dbReference type="InterPro" id="IPR009022">
    <property type="entry name" value="EFG_III"/>
</dbReference>
<dbReference type="InterPro" id="IPR035647">
    <property type="entry name" value="EFG_III/V"/>
</dbReference>
<dbReference type="InterPro" id="IPR047872">
    <property type="entry name" value="EFG_IV"/>
</dbReference>
<dbReference type="InterPro" id="IPR035649">
    <property type="entry name" value="EFG_V"/>
</dbReference>
<dbReference type="InterPro" id="IPR000640">
    <property type="entry name" value="EFG_V-like"/>
</dbReference>
<dbReference type="InterPro" id="IPR004161">
    <property type="entry name" value="EFTu-like_2"/>
</dbReference>
<dbReference type="InterPro" id="IPR031157">
    <property type="entry name" value="G_TR_CS"/>
</dbReference>
<dbReference type="InterPro" id="IPR027417">
    <property type="entry name" value="P-loop_NTPase"/>
</dbReference>
<dbReference type="InterPro" id="IPR020568">
    <property type="entry name" value="Ribosomal_Su5_D2-typ_SF"/>
</dbReference>
<dbReference type="InterPro" id="IPR014721">
    <property type="entry name" value="Ribsml_uS5_D2-typ_fold_subgr"/>
</dbReference>
<dbReference type="InterPro" id="IPR005225">
    <property type="entry name" value="Small_GTP-bd"/>
</dbReference>
<dbReference type="InterPro" id="IPR000795">
    <property type="entry name" value="T_Tr_GTP-bd_dom"/>
</dbReference>
<dbReference type="InterPro" id="IPR009000">
    <property type="entry name" value="Transl_B-barrel_sf"/>
</dbReference>
<dbReference type="InterPro" id="IPR004540">
    <property type="entry name" value="Transl_elong_EFG/EF2"/>
</dbReference>
<dbReference type="InterPro" id="IPR005517">
    <property type="entry name" value="Transl_elong_EFG/EF2_IV"/>
</dbReference>
<dbReference type="NCBIfam" id="TIGR00484">
    <property type="entry name" value="EF-G"/>
    <property type="match status" value="1"/>
</dbReference>
<dbReference type="NCBIfam" id="NF009379">
    <property type="entry name" value="PRK12740.1-3"/>
    <property type="match status" value="1"/>
</dbReference>
<dbReference type="NCBIfam" id="NF009381">
    <property type="entry name" value="PRK12740.1-5"/>
    <property type="match status" value="1"/>
</dbReference>
<dbReference type="NCBIfam" id="NF009891">
    <property type="entry name" value="PRK13351.1-1"/>
    <property type="match status" value="1"/>
</dbReference>
<dbReference type="NCBIfam" id="TIGR00231">
    <property type="entry name" value="small_GTP"/>
    <property type="match status" value="1"/>
</dbReference>
<dbReference type="PANTHER" id="PTHR43261:SF1">
    <property type="entry name" value="RIBOSOME-RELEASING FACTOR 2, MITOCHONDRIAL"/>
    <property type="match status" value="1"/>
</dbReference>
<dbReference type="PANTHER" id="PTHR43261">
    <property type="entry name" value="TRANSLATION ELONGATION FACTOR G-RELATED"/>
    <property type="match status" value="1"/>
</dbReference>
<dbReference type="Pfam" id="PF00679">
    <property type="entry name" value="EFG_C"/>
    <property type="match status" value="1"/>
</dbReference>
<dbReference type="Pfam" id="PF14492">
    <property type="entry name" value="EFG_III"/>
    <property type="match status" value="1"/>
</dbReference>
<dbReference type="Pfam" id="PF03764">
    <property type="entry name" value="EFG_IV"/>
    <property type="match status" value="1"/>
</dbReference>
<dbReference type="Pfam" id="PF00009">
    <property type="entry name" value="GTP_EFTU"/>
    <property type="match status" value="1"/>
</dbReference>
<dbReference type="Pfam" id="PF03144">
    <property type="entry name" value="GTP_EFTU_D2"/>
    <property type="match status" value="1"/>
</dbReference>
<dbReference type="PRINTS" id="PR00315">
    <property type="entry name" value="ELONGATNFCT"/>
</dbReference>
<dbReference type="SMART" id="SM00838">
    <property type="entry name" value="EFG_C"/>
    <property type="match status" value="1"/>
</dbReference>
<dbReference type="SMART" id="SM00889">
    <property type="entry name" value="EFG_IV"/>
    <property type="match status" value="1"/>
</dbReference>
<dbReference type="SUPFAM" id="SSF54980">
    <property type="entry name" value="EF-G C-terminal domain-like"/>
    <property type="match status" value="2"/>
</dbReference>
<dbReference type="SUPFAM" id="SSF52540">
    <property type="entry name" value="P-loop containing nucleoside triphosphate hydrolases"/>
    <property type="match status" value="1"/>
</dbReference>
<dbReference type="SUPFAM" id="SSF54211">
    <property type="entry name" value="Ribosomal protein S5 domain 2-like"/>
    <property type="match status" value="1"/>
</dbReference>
<dbReference type="SUPFAM" id="SSF50447">
    <property type="entry name" value="Translation proteins"/>
    <property type="match status" value="1"/>
</dbReference>
<dbReference type="PROSITE" id="PS00301">
    <property type="entry name" value="G_TR_1"/>
    <property type="match status" value="1"/>
</dbReference>
<dbReference type="PROSITE" id="PS51722">
    <property type="entry name" value="G_TR_2"/>
    <property type="match status" value="1"/>
</dbReference>
<evidence type="ECO:0000255" key="1">
    <source>
        <dbReference type="HAMAP-Rule" id="MF_00054"/>
    </source>
</evidence>
<name>EFG_GEOSW</name>
<gene>
    <name evidence="1" type="primary">fusA</name>
    <name type="ordered locus">GWCH70_0108</name>
</gene>
<proteinExistence type="inferred from homology"/>
<feature type="chain" id="PRO_1000202303" description="Elongation factor G">
    <location>
        <begin position="1"/>
        <end position="692"/>
    </location>
</feature>
<feature type="domain" description="tr-type G">
    <location>
        <begin position="8"/>
        <end position="282"/>
    </location>
</feature>
<feature type="binding site" evidence="1">
    <location>
        <begin position="17"/>
        <end position="24"/>
    </location>
    <ligand>
        <name>GTP</name>
        <dbReference type="ChEBI" id="CHEBI:37565"/>
    </ligand>
</feature>
<feature type="binding site" evidence="1">
    <location>
        <begin position="81"/>
        <end position="85"/>
    </location>
    <ligand>
        <name>GTP</name>
        <dbReference type="ChEBI" id="CHEBI:37565"/>
    </ligand>
</feature>
<feature type="binding site" evidence="1">
    <location>
        <begin position="135"/>
        <end position="138"/>
    </location>
    <ligand>
        <name>GTP</name>
        <dbReference type="ChEBI" id="CHEBI:37565"/>
    </ligand>
</feature>
<protein>
    <recommendedName>
        <fullName evidence="1">Elongation factor G</fullName>
        <shortName evidence="1">EF-G</shortName>
    </recommendedName>
</protein>
<comment type="function">
    <text evidence="1">Catalyzes the GTP-dependent ribosomal translocation step during translation elongation. During this step, the ribosome changes from the pre-translocational (PRE) to the post-translocational (POST) state as the newly formed A-site-bound peptidyl-tRNA and P-site-bound deacylated tRNA move to the P and E sites, respectively. Catalyzes the coordinated movement of the two tRNA molecules, the mRNA and conformational changes in the ribosome.</text>
</comment>
<comment type="subcellular location">
    <subcellularLocation>
        <location evidence="1">Cytoplasm</location>
    </subcellularLocation>
</comment>
<comment type="similarity">
    <text evidence="1">Belongs to the TRAFAC class translation factor GTPase superfamily. Classic translation factor GTPase family. EF-G/EF-2 subfamily.</text>
</comment>
<organism>
    <name type="scientific">Geobacillus sp. (strain WCH70)</name>
    <dbReference type="NCBI Taxonomy" id="471223"/>
    <lineage>
        <taxon>Bacteria</taxon>
        <taxon>Bacillati</taxon>
        <taxon>Bacillota</taxon>
        <taxon>Bacilli</taxon>
        <taxon>Bacillales</taxon>
        <taxon>Anoxybacillaceae</taxon>
        <taxon>Geobacillus</taxon>
    </lineage>
</organism>
<reference key="1">
    <citation type="submission" date="2009-06" db="EMBL/GenBank/DDBJ databases">
        <title>Complete sequence of chromosome of Geopacillus sp. WCH70.</title>
        <authorList>
            <consortium name="US DOE Joint Genome Institute"/>
            <person name="Lucas S."/>
            <person name="Copeland A."/>
            <person name="Lapidus A."/>
            <person name="Glavina del Rio T."/>
            <person name="Dalin E."/>
            <person name="Tice H."/>
            <person name="Bruce D."/>
            <person name="Goodwin L."/>
            <person name="Pitluck S."/>
            <person name="Chertkov O."/>
            <person name="Brettin T."/>
            <person name="Detter J.C."/>
            <person name="Han C."/>
            <person name="Larimer F."/>
            <person name="Land M."/>
            <person name="Hauser L."/>
            <person name="Kyrpides N."/>
            <person name="Mikhailova N."/>
            <person name="Brumm P."/>
            <person name="Mead D.A."/>
            <person name="Richardson P."/>
        </authorList>
    </citation>
    <scope>NUCLEOTIDE SEQUENCE [LARGE SCALE GENOMIC DNA]</scope>
    <source>
        <strain>WCH70</strain>
    </source>
</reference>
<accession>C5D3R4</accession>